<proteinExistence type="evidence at transcript level"/>
<dbReference type="EMBL" id="AE013599">
    <property type="protein sequence ID" value="AAF57703.2"/>
    <property type="molecule type" value="Genomic_DNA"/>
</dbReference>
<dbReference type="EMBL" id="AY069107">
    <property type="protein sequence ID" value="AAL39252.1"/>
    <property type="status" value="ALT_FRAME"/>
    <property type="molecule type" value="mRNA"/>
</dbReference>
<dbReference type="EMBL" id="BT012501">
    <property type="protein sequence ID" value="AAS93772.1"/>
    <property type="molecule type" value="mRNA"/>
</dbReference>
<dbReference type="RefSeq" id="NP_611321.3">
    <property type="nucleotide sequence ID" value="NM_137477.4"/>
</dbReference>
<dbReference type="SMR" id="Q8T0R7"/>
<dbReference type="BioGRID" id="62783">
    <property type="interactions" value="2"/>
</dbReference>
<dbReference type="FunCoup" id="Q8T0R7">
    <property type="interactions" value="6"/>
</dbReference>
<dbReference type="IntAct" id="Q8T0R7">
    <property type="interactions" value="1"/>
</dbReference>
<dbReference type="STRING" id="7227.FBpp0085849"/>
<dbReference type="CAZy" id="GH18">
    <property type="family name" value="Glycoside Hydrolase Family 18"/>
</dbReference>
<dbReference type="GlyCosmos" id="Q8T0R7">
    <property type="glycosylation" value="2 sites, No reported glycans"/>
</dbReference>
<dbReference type="GlyGen" id="Q8T0R7">
    <property type="glycosylation" value="3 sites"/>
</dbReference>
<dbReference type="PaxDb" id="7227-FBpp0085849"/>
<dbReference type="DNASU" id="37104"/>
<dbReference type="EnsemblMetazoa" id="FBtr0086668">
    <property type="protein sequence ID" value="FBpp0085849"/>
    <property type="gene ID" value="FBgn0064237"/>
</dbReference>
<dbReference type="GeneID" id="37104"/>
<dbReference type="KEGG" id="dme:Dmel_CG5154"/>
<dbReference type="AGR" id="FB:FBgn0064237"/>
<dbReference type="CTD" id="37104"/>
<dbReference type="FlyBase" id="FBgn0064237">
    <property type="gene designation" value="Idgf5"/>
</dbReference>
<dbReference type="VEuPathDB" id="VectorBase:FBgn0064237"/>
<dbReference type="eggNOG" id="KOG2806">
    <property type="taxonomic scope" value="Eukaryota"/>
</dbReference>
<dbReference type="GeneTree" id="ENSGT00940000167840"/>
<dbReference type="HOGENOM" id="CLU_002833_3_2_1"/>
<dbReference type="InParanoid" id="Q8T0R7"/>
<dbReference type="OMA" id="QCAGEKF"/>
<dbReference type="OrthoDB" id="76388at2759"/>
<dbReference type="PhylomeDB" id="Q8T0R7"/>
<dbReference type="Reactome" id="R-DME-6798695">
    <property type="pathway name" value="Neutrophil degranulation"/>
</dbReference>
<dbReference type="BioGRID-ORCS" id="37104">
    <property type="hits" value="0 hits in 1 CRISPR screen"/>
</dbReference>
<dbReference type="GenomeRNAi" id="37104"/>
<dbReference type="PRO" id="PR:Q8T0R7"/>
<dbReference type="Proteomes" id="UP000000803">
    <property type="component" value="Chromosome 2R"/>
</dbReference>
<dbReference type="Bgee" id="FBgn0064237">
    <property type="expression patterns" value="Expressed in fat body cell in male reproductive gland and 31 other cell types or tissues"/>
</dbReference>
<dbReference type="ExpressionAtlas" id="Q8T0R7">
    <property type="expression patterns" value="baseline and differential"/>
</dbReference>
<dbReference type="GO" id="GO:0005576">
    <property type="term" value="C:extracellular region"/>
    <property type="evidence" value="ECO:0007005"/>
    <property type="project" value="FlyBase"/>
</dbReference>
<dbReference type="GO" id="GO:0008061">
    <property type="term" value="F:chitin binding"/>
    <property type="evidence" value="ECO:0007669"/>
    <property type="project" value="InterPro"/>
</dbReference>
<dbReference type="GO" id="GO:0008084">
    <property type="term" value="F:imaginal disc growth factor receptor binding"/>
    <property type="evidence" value="ECO:0000314"/>
    <property type="project" value="UniProtKB"/>
</dbReference>
<dbReference type="GO" id="GO:0005975">
    <property type="term" value="P:carbohydrate metabolic process"/>
    <property type="evidence" value="ECO:0007669"/>
    <property type="project" value="InterPro"/>
</dbReference>
<dbReference type="GO" id="GO:0006032">
    <property type="term" value="P:chitin catabolic process"/>
    <property type="evidence" value="ECO:0000318"/>
    <property type="project" value="GO_Central"/>
</dbReference>
<dbReference type="GO" id="GO:0040003">
    <property type="term" value="P:chitin-based cuticle development"/>
    <property type="evidence" value="ECO:0000315"/>
    <property type="project" value="FlyBase"/>
</dbReference>
<dbReference type="GO" id="GO:0007444">
    <property type="term" value="P:imaginal disc development"/>
    <property type="evidence" value="ECO:0000314"/>
    <property type="project" value="UniProtKB"/>
</dbReference>
<dbReference type="GO" id="GO:0042060">
    <property type="term" value="P:wound healing"/>
    <property type="evidence" value="ECO:0000315"/>
    <property type="project" value="FlyBase"/>
</dbReference>
<dbReference type="CDD" id="cd02873">
    <property type="entry name" value="GH18_IDGF"/>
    <property type="match status" value="1"/>
</dbReference>
<dbReference type="FunFam" id="3.10.50.10:FF:000007">
    <property type="entry name" value="chitinase-like protein Idgf4"/>
    <property type="match status" value="1"/>
</dbReference>
<dbReference type="FunFam" id="3.20.20.80:FF:000071">
    <property type="entry name" value="Imaginal disc growth factor"/>
    <property type="match status" value="1"/>
</dbReference>
<dbReference type="Gene3D" id="3.10.50.10">
    <property type="match status" value="1"/>
</dbReference>
<dbReference type="Gene3D" id="3.20.20.80">
    <property type="entry name" value="Glycosidases"/>
    <property type="match status" value="1"/>
</dbReference>
<dbReference type="InterPro" id="IPR011583">
    <property type="entry name" value="Chitinase_II/V-like_cat"/>
</dbReference>
<dbReference type="InterPro" id="IPR029070">
    <property type="entry name" value="Chitinase_insertion_sf"/>
</dbReference>
<dbReference type="InterPro" id="IPR001223">
    <property type="entry name" value="Glyco_hydro18_cat"/>
</dbReference>
<dbReference type="InterPro" id="IPR017853">
    <property type="entry name" value="Glycoside_hydrolase_SF"/>
</dbReference>
<dbReference type="InterPro" id="IPR050314">
    <property type="entry name" value="Glycosyl_Hydrlase_18"/>
</dbReference>
<dbReference type="InterPro" id="IPR015520">
    <property type="entry name" value="IDGF"/>
</dbReference>
<dbReference type="PANTHER" id="PTHR11177">
    <property type="entry name" value="CHITINASE"/>
    <property type="match status" value="1"/>
</dbReference>
<dbReference type="PANTHER" id="PTHR11177:SF235">
    <property type="entry name" value="CHITINASE-LIKE PROTEIN IDGF1-RELATED"/>
    <property type="match status" value="1"/>
</dbReference>
<dbReference type="Pfam" id="PF00704">
    <property type="entry name" value="Glyco_hydro_18"/>
    <property type="match status" value="1"/>
</dbReference>
<dbReference type="SMART" id="SM00636">
    <property type="entry name" value="Glyco_18"/>
    <property type="match status" value="1"/>
</dbReference>
<dbReference type="SUPFAM" id="SSF51445">
    <property type="entry name" value="(Trans)glycosidases"/>
    <property type="match status" value="1"/>
</dbReference>
<dbReference type="SUPFAM" id="SSF54556">
    <property type="entry name" value="Chitinase insertion domain"/>
    <property type="match status" value="1"/>
</dbReference>
<dbReference type="PROSITE" id="PS51910">
    <property type="entry name" value="GH18_2"/>
    <property type="match status" value="1"/>
</dbReference>
<reference key="1">
    <citation type="journal article" date="2000" name="Science">
        <title>The genome sequence of Drosophila melanogaster.</title>
        <authorList>
            <person name="Adams M.D."/>
            <person name="Celniker S.E."/>
            <person name="Holt R.A."/>
            <person name="Evans C.A."/>
            <person name="Gocayne J.D."/>
            <person name="Amanatides P.G."/>
            <person name="Scherer S.E."/>
            <person name="Li P.W."/>
            <person name="Hoskins R.A."/>
            <person name="Galle R.F."/>
            <person name="George R.A."/>
            <person name="Lewis S.E."/>
            <person name="Richards S."/>
            <person name="Ashburner M."/>
            <person name="Henderson S.N."/>
            <person name="Sutton G.G."/>
            <person name="Wortman J.R."/>
            <person name="Yandell M.D."/>
            <person name="Zhang Q."/>
            <person name="Chen L.X."/>
            <person name="Brandon R.C."/>
            <person name="Rogers Y.-H.C."/>
            <person name="Blazej R.G."/>
            <person name="Champe M."/>
            <person name="Pfeiffer B.D."/>
            <person name="Wan K.H."/>
            <person name="Doyle C."/>
            <person name="Baxter E.G."/>
            <person name="Helt G."/>
            <person name="Nelson C.R."/>
            <person name="Miklos G.L.G."/>
            <person name="Abril J.F."/>
            <person name="Agbayani A."/>
            <person name="An H.-J."/>
            <person name="Andrews-Pfannkoch C."/>
            <person name="Baldwin D."/>
            <person name="Ballew R.M."/>
            <person name="Basu A."/>
            <person name="Baxendale J."/>
            <person name="Bayraktaroglu L."/>
            <person name="Beasley E.M."/>
            <person name="Beeson K.Y."/>
            <person name="Benos P.V."/>
            <person name="Berman B.P."/>
            <person name="Bhandari D."/>
            <person name="Bolshakov S."/>
            <person name="Borkova D."/>
            <person name="Botchan M.R."/>
            <person name="Bouck J."/>
            <person name="Brokstein P."/>
            <person name="Brottier P."/>
            <person name="Burtis K.C."/>
            <person name="Busam D.A."/>
            <person name="Butler H."/>
            <person name="Cadieu E."/>
            <person name="Center A."/>
            <person name="Chandra I."/>
            <person name="Cherry J.M."/>
            <person name="Cawley S."/>
            <person name="Dahlke C."/>
            <person name="Davenport L.B."/>
            <person name="Davies P."/>
            <person name="de Pablos B."/>
            <person name="Delcher A."/>
            <person name="Deng Z."/>
            <person name="Mays A.D."/>
            <person name="Dew I."/>
            <person name="Dietz S.M."/>
            <person name="Dodson K."/>
            <person name="Doup L.E."/>
            <person name="Downes M."/>
            <person name="Dugan-Rocha S."/>
            <person name="Dunkov B.C."/>
            <person name="Dunn P."/>
            <person name="Durbin K.J."/>
            <person name="Evangelista C.C."/>
            <person name="Ferraz C."/>
            <person name="Ferriera S."/>
            <person name="Fleischmann W."/>
            <person name="Fosler C."/>
            <person name="Gabrielian A.E."/>
            <person name="Garg N.S."/>
            <person name="Gelbart W.M."/>
            <person name="Glasser K."/>
            <person name="Glodek A."/>
            <person name="Gong F."/>
            <person name="Gorrell J.H."/>
            <person name="Gu Z."/>
            <person name="Guan P."/>
            <person name="Harris M."/>
            <person name="Harris N.L."/>
            <person name="Harvey D.A."/>
            <person name="Heiman T.J."/>
            <person name="Hernandez J.R."/>
            <person name="Houck J."/>
            <person name="Hostin D."/>
            <person name="Houston K.A."/>
            <person name="Howland T.J."/>
            <person name="Wei M.-H."/>
            <person name="Ibegwam C."/>
            <person name="Jalali M."/>
            <person name="Kalush F."/>
            <person name="Karpen G.H."/>
            <person name="Ke Z."/>
            <person name="Kennison J.A."/>
            <person name="Ketchum K.A."/>
            <person name="Kimmel B.E."/>
            <person name="Kodira C.D."/>
            <person name="Kraft C.L."/>
            <person name="Kravitz S."/>
            <person name="Kulp D."/>
            <person name="Lai Z."/>
            <person name="Lasko P."/>
            <person name="Lei Y."/>
            <person name="Levitsky A.A."/>
            <person name="Li J.H."/>
            <person name="Li Z."/>
            <person name="Liang Y."/>
            <person name="Lin X."/>
            <person name="Liu X."/>
            <person name="Mattei B."/>
            <person name="McIntosh T.C."/>
            <person name="McLeod M.P."/>
            <person name="McPherson D."/>
            <person name="Merkulov G."/>
            <person name="Milshina N.V."/>
            <person name="Mobarry C."/>
            <person name="Morris J."/>
            <person name="Moshrefi A."/>
            <person name="Mount S.M."/>
            <person name="Moy M."/>
            <person name="Murphy B."/>
            <person name="Murphy L."/>
            <person name="Muzny D.M."/>
            <person name="Nelson D.L."/>
            <person name="Nelson D.R."/>
            <person name="Nelson K.A."/>
            <person name="Nixon K."/>
            <person name="Nusskern D.R."/>
            <person name="Pacleb J.M."/>
            <person name="Palazzolo M."/>
            <person name="Pittman G.S."/>
            <person name="Pan S."/>
            <person name="Pollard J."/>
            <person name="Puri V."/>
            <person name="Reese M.G."/>
            <person name="Reinert K."/>
            <person name="Remington K."/>
            <person name="Saunders R.D.C."/>
            <person name="Scheeler F."/>
            <person name="Shen H."/>
            <person name="Shue B.C."/>
            <person name="Siden-Kiamos I."/>
            <person name="Simpson M."/>
            <person name="Skupski M.P."/>
            <person name="Smith T.J."/>
            <person name="Spier E."/>
            <person name="Spradling A.C."/>
            <person name="Stapleton M."/>
            <person name="Strong R."/>
            <person name="Sun E."/>
            <person name="Svirskas R."/>
            <person name="Tector C."/>
            <person name="Turner R."/>
            <person name="Venter E."/>
            <person name="Wang A.H."/>
            <person name="Wang X."/>
            <person name="Wang Z.-Y."/>
            <person name="Wassarman D.A."/>
            <person name="Weinstock G.M."/>
            <person name="Weissenbach J."/>
            <person name="Williams S.M."/>
            <person name="Woodage T."/>
            <person name="Worley K.C."/>
            <person name="Wu D."/>
            <person name="Yang S."/>
            <person name="Yao Q.A."/>
            <person name="Ye J."/>
            <person name="Yeh R.-F."/>
            <person name="Zaveri J.S."/>
            <person name="Zhan M."/>
            <person name="Zhang G."/>
            <person name="Zhao Q."/>
            <person name="Zheng L."/>
            <person name="Zheng X.H."/>
            <person name="Zhong F.N."/>
            <person name="Zhong W."/>
            <person name="Zhou X."/>
            <person name="Zhu S.C."/>
            <person name="Zhu X."/>
            <person name="Smith H.O."/>
            <person name="Gibbs R.A."/>
            <person name="Myers E.W."/>
            <person name="Rubin G.M."/>
            <person name="Venter J.C."/>
        </authorList>
    </citation>
    <scope>NUCLEOTIDE SEQUENCE [LARGE SCALE GENOMIC DNA]</scope>
    <source>
        <strain>Berkeley</strain>
    </source>
</reference>
<reference key="2">
    <citation type="journal article" date="2002" name="Genome Biol.">
        <title>Annotation of the Drosophila melanogaster euchromatic genome: a systematic review.</title>
        <authorList>
            <person name="Misra S."/>
            <person name="Crosby M.A."/>
            <person name="Mungall C.J."/>
            <person name="Matthews B.B."/>
            <person name="Campbell K.S."/>
            <person name="Hradecky P."/>
            <person name="Huang Y."/>
            <person name="Kaminker J.S."/>
            <person name="Millburn G.H."/>
            <person name="Prochnik S.E."/>
            <person name="Smith C.D."/>
            <person name="Tupy J.L."/>
            <person name="Whitfield E.J."/>
            <person name="Bayraktaroglu L."/>
            <person name="Berman B.P."/>
            <person name="Bettencourt B.R."/>
            <person name="Celniker S.E."/>
            <person name="de Grey A.D.N.J."/>
            <person name="Drysdale R.A."/>
            <person name="Harris N.L."/>
            <person name="Richter J."/>
            <person name="Russo S."/>
            <person name="Schroeder A.J."/>
            <person name="Shu S.Q."/>
            <person name="Stapleton M."/>
            <person name="Yamada C."/>
            <person name="Ashburner M."/>
            <person name="Gelbart W.M."/>
            <person name="Rubin G.M."/>
            <person name="Lewis S.E."/>
        </authorList>
    </citation>
    <scope>GENOME REANNOTATION</scope>
    <source>
        <strain>Berkeley</strain>
    </source>
</reference>
<reference key="3">
    <citation type="journal article" date="2002" name="Genome Biol.">
        <title>A Drosophila full-length cDNA resource.</title>
        <authorList>
            <person name="Stapleton M."/>
            <person name="Carlson J.W."/>
            <person name="Brokstein P."/>
            <person name="Yu C."/>
            <person name="Champe M."/>
            <person name="George R.A."/>
            <person name="Guarin H."/>
            <person name="Kronmiller B."/>
            <person name="Pacleb J.M."/>
            <person name="Park S."/>
            <person name="Wan K.H."/>
            <person name="Rubin G.M."/>
            <person name="Celniker S.E."/>
        </authorList>
    </citation>
    <scope>NUCLEOTIDE SEQUENCE [LARGE SCALE MRNA]</scope>
    <source>
        <strain>Berkeley</strain>
        <tissue>Head</tissue>
    </source>
</reference>
<reference key="4">
    <citation type="submission" date="2004-04" db="EMBL/GenBank/DDBJ databases">
        <authorList>
            <person name="Stapleton M."/>
            <person name="Carlson J.W."/>
            <person name="Chavez C."/>
            <person name="Frise E."/>
            <person name="George R.A."/>
            <person name="Pacleb J.M."/>
            <person name="Park S."/>
            <person name="Wan K.H."/>
            <person name="Yu C."/>
            <person name="Rubin G.M."/>
            <person name="Celniker S.E."/>
        </authorList>
    </citation>
    <scope>NUCLEOTIDE SEQUENCE [LARGE SCALE MRNA]</scope>
    <source>
        <strain>Berkeley</strain>
        <tissue>Head</tissue>
    </source>
</reference>
<accession>Q8T0R7</accession>
<accession>Q9V8G4</accession>
<evidence type="ECO:0000250" key="1"/>
<evidence type="ECO:0000255" key="2"/>
<evidence type="ECO:0000255" key="3">
    <source>
        <dbReference type="PROSITE-ProRule" id="PRU01258"/>
    </source>
</evidence>
<evidence type="ECO:0000305" key="4"/>
<sequence>MMWIQKNPFLGLLLCSFLAFFQSTYAEVGKLVCFYDAQSFVREGPAQMSLAELEPALQFCNFLVYGYAGIDAVTYKIKSLDPSLTNDRQHYRHITALRKKYPHVRFLLSVGGDRDVNSEGVADSDKYLRLLEQSEHRKSFQASVLAELNNNGFDGIDLAWQFPKNRPKLQQGVFKRVWGSLRGWFSSSSVDEKSEEHREQFATLLEELQSDLRRGGQLLTVSMLPHVSAELFIDVPKVLSNVDFVNLGTYDFQTPERDPKVADLPTPLYAMYDRDPSHNVQYQVQYWMNQTSEISVHKLHVGVTSYGRAWNMTRNSGITGYPPIPAANGAAPPGRQTVTPGLLSWPEICDLLQQQPQDREVPHLRKVGDPTKRFGIYAYRAADDQGENGLWVGYEDPLTAAIKAGFVHAQGLGGVAFHDLSMDDFRGQCAGEKFPILRSIKFKL</sequence>
<comment type="function">
    <text evidence="1">Probably required to stimulate the proliferation, polarization and motility of imaginal disk cells. May act by stabilizing the binding of insulin-like peptides to its receptor through a simultaneous interaction with both molecules to form a multiprotein signaling complex (By similarity).</text>
</comment>
<comment type="subcellular location">
    <subcellularLocation>
        <location evidence="1">Secreted</location>
    </subcellularLocation>
    <text evidence="1">Secreted in hemolymph. It is probably transported to target tissues via hemolymph.</text>
</comment>
<comment type="PTM">
    <text evidence="1">Glycosylated.</text>
</comment>
<comment type="miscellaneous">
    <text>Lacks the typical Glu active site in position 161 that is replaced by a Gln residue, preventing the hydrolase activity. Its precise function remains unclear.</text>
</comment>
<comment type="similarity">
    <text evidence="4">Belongs to the glycosyl hydrolase 18 family. IDGF subfamily.</text>
</comment>
<comment type="sequence caution" evidence="4">
    <conflict type="frameshift">
        <sequence resource="EMBL-CDS" id="AAL39252"/>
    </conflict>
</comment>
<keyword id="KW-0217">Developmental protein</keyword>
<keyword id="KW-1015">Disulfide bond</keyword>
<keyword id="KW-0325">Glycoprotein</keyword>
<keyword id="KW-1185">Reference proteome</keyword>
<keyword id="KW-0964">Secreted</keyword>
<keyword id="KW-0732">Signal</keyword>
<feature type="signal peptide" evidence="1">
    <location>
        <begin position="1"/>
        <end position="26"/>
    </location>
</feature>
<feature type="chain" id="PRO_0000011988" description="Chitinase-like protein Idgf5">
    <location>
        <begin position="27"/>
        <end position="444"/>
    </location>
</feature>
<feature type="domain" description="GH18" evidence="3">
    <location>
        <begin position="29"/>
        <end position="444"/>
    </location>
</feature>
<feature type="glycosylation site" description="N-linked (GlcNAc...) asparagine" evidence="1">
    <location>
        <position position="289"/>
    </location>
</feature>
<feature type="glycosylation site" description="N-linked (GlcNAc...) asparagine" evidence="2">
    <location>
        <position position="311"/>
    </location>
</feature>
<feature type="disulfide bond" evidence="3">
    <location>
        <begin position="33"/>
        <end position="60"/>
    </location>
</feature>
<feature type="disulfide bond" evidence="1">
    <location>
        <begin position="349"/>
        <end position="429"/>
    </location>
</feature>
<organism>
    <name type="scientific">Drosophila melanogaster</name>
    <name type="common">Fruit fly</name>
    <dbReference type="NCBI Taxonomy" id="7227"/>
    <lineage>
        <taxon>Eukaryota</taxon>
        <taxon>Metazoa</taxon>
        <taxon>Ecdysozoa</taxon>
        <taxon>Arthropoda</taxon>
        <taxon>Hexapoda</taxon>
        <taxon>Insecta</taxon>
        <taxon>Pterygota</taxon>
        <taxon>Neoptera</taxon>
        <taxon>Endopterygota</taxon>
        <taxon>Diptera</taxon>
        <taxon>Brachycera</taxon>
        <taxon>Muscomorpha</taxon>
        <taxon>Ephydroidea</taxon>
        <taxon>Drosophilidae</taxon>
        <taxon>Drosophila</taxon>
        <taxon>Sophophora</taxon>
    </lineage>
</organism>
<gene>
    <name type="primary">Idgf5</name>
    <name type="ORF">CG5154</name>
</gene>
<name>IDGF5_DROME</name>
<protein>
    <recommendedName>
        <fullName>Chitinase-like protein Idgf5</fullName>
    </recommendedName>
    <alternativeName>
        <fullName>Imaginal disk growth factor protein 5</fullName>
    </alternativeName>
</protein>